<gene>
    <name evidence="1 6" type="primary">leuA</name>
    <name type="ordered locus">STM0113</name>
</gene>
<reference key="1">
    <citation type="journal article" date="1990" name="Nucleic Acids Res.">
        <title>The nucleotide sequence of leuA from Salmonella typhimurium.</title>
        <authorList>
            <person name="Ricca E."/>
            <person name="Calvo J.M."/>
        </authorList>
    </citation>
    <scope>NUCLEOTIDE SEQUENCE [GENOMIC DNA]</scope>
    <source>
        <strain>LT2</strain>
    </source>
</reference>
<reference key="2">
    <citation type="journal article" date="2001" name="Nature">
        <title>Complete genome sequence of Salmonella enterica serovar Typhimurium LT2.</title>
        <authorList>
            <person name="McClelland M."/>
            <person name="Sanderson K.E."/>
            <person name="Spieth J."/>
            <person name="Clifton S.W."/>
            <person name="Latreille P."/>
            <person name="Courtney L."/>
            <person name="Porwollik S."/>
            <person name="Ali J."/>
            <person name="Dante M."/>
            <person name="Du F."/>
            <person name="Hou S."/>
            <person name="Layman D."/>
            <person name="Leonard S."/>
            <person name="Nguyen C."/>
            <person name="Scott K."/>
            <person name="Holmes A."/>
            <person name="Grewal N."/>
            <person name="Mulvaney E."/>
            <person name="Ryan E."/>
            <person name="Sun H."/>
            <person name="Florea L."/>
            <person name="Miller W."/>
            <person name="Stoneking T."/>
            <person name="Nhan M."/>
            <person name="Waterston R."/>
            <person name="Wilson R.K."/>
        </authorList>
    </citation>
    <scope>NUCLEOTIDE SEQUENCE [LARGE SCALE GENOMIC DNA]</scope>
    <source>
        <strain>LT2 / SGSC1412 / ATCC 700720</strain>
    </source>
</reference>
<reference key="3">
    <citation type="journal article" date="1979" name="Proc. Natl. Acad. Sci. U.S.A.">
        <title>Leu operon of Salmonella typhimurium is controlled by an attenuation mechanism.</title>
        <authorList>
            <person name="Gemmill R.M."/>
            <person name="Wessler S.R."/>
            <person name="Keller E.B."/>
            <person name="Calvo J.M."/>
        </authorList>
    </citation>
    <scope>NUCLEOTIDE SEQUENCE [GENOMIC DNA] OF 1-30</scope>
    <source>
        <strain>LT2</strain>
    </source>
</reference>
<reference key="4">
    <citation type="journal article" date="1983" name="J. Mol. Biol.">
        <title>Transcription initiation sites of the leucine operons of Salmonella typhimurium and Escherichia coli.</title>
        <authorList>
            <person name="Gemmill R.M."/>
            <person name="Jones J.W."/>
            <person name="Haughn G.W."/>
            <person name="Calvo J.M."/>
        </authorList>
    </citation>
    <scope>PROTEIN SEQUENCE OF 3-12</scope>
    <scope>FUNCTION</scope>
    <scope>CATALYTIC ACTIVITY</scope>
    <source>
        <strain>LT2</strain>
    </source>
</reference>
<reference key="5">
    <citation type="journal article" date="1969" name="J. Biol. Chem.">
        <title>Alpha-isopropylmalate synthase from Salmonella typhimurium. Purification and properties.</title>
        <authorList>
            <person name="Kohlhaw G."/>
            <person name="Leary T.R."/>
            <person name="Umbarger H.E."/>
        </authorList>
    </citation>
    <scope>FUNCTION</scope>
    <scope>CATALYTIC ACTIVITY</scope>
    <scope>ACTIVITY REGULATION</scope>
    <scope>BIOPHYSICOCHEMICAL PROPERTIES</scope>
    <source>
        <strain>CV-19</strain>
    </source>
</reference>
<reference key="6">
    <citation type="journal article" date="1972" name="J. Biol. Chem.">
        <title>Alpha-isopropylmalate synthase from Salmonella typhimurium. Analysis of the quaternary structure and its relation to function.</title>
        <authorList>
            <person name="Leary T.R."/>
            <person name="Kohlhaw G.B."/>
        </authorList>
    </citation>
    <scope>SUBUNIT</scope>
    <source>
        <strain>CV-19</strain>
    </source>
</reference>
<proteinExistence type="evidence at protein level"/>
<sequence>MSQQVIIFDTTLRDGEQALQASLSAKEKLQIALALERMGVDVMEVGFPVSSPGDFESVQTIARTIKNSRVCALARCVEKDIDVAAQALKVADAFRIHTFIATSPMHIATKLRSTLDEVIERAVYMVKRARNYTDDVEFSCEDAGRTPVDDLARVVEAAINAGARTINIPDTVGYTMPFEFAGIISGLYERVPNIDKAIISVHTHDDLGIAVGNSLAAVHAGARQVEGAMNGIGERAGNCALEEVIMAIKVRKDIMNVHTNINHHEIWRTSQTVSQICNMPIPANKAIVGSGAFAHSSGIHQDGVLKNRENYEIMTPESIGLNQIQLNLTSRSGRAAVKHRMEEMGYKDTDYNMDHLYDAFLKLADKKGQVFDYDLEALAFINKQQEEPEHFRLDYFSVQSGSSDIATASVKLACGEEIKAEAANGNGPVDAIYQAINRITGYDVELVKYDLNAKGQGKDALGQVDIVVNHHGRRFHGVGLATDIVESSAKAMVHVLNNIWRAAEVEKELQRKAQNKENNKETV</sequence>
<name>LEU1_SALTY</name>
<feature type="propeptide" id="PRO_0000457619" description="Removed" evidence="4">
    <location>
        <begin position="1"/>
        <end position="2"/>
    </location>
</feature>
<feature type="chain" id="PRO_0000140375" description="2-isopropylmalate synthase">
    <location>
        <begin position="3"/>
        <end position="523"/>
    </location>
</feature>
<feature type="domain" description="Pyruvate carboxyltransferase" evidence="1">
    <location>
        <begin position="5"/>
        <end position="267"/>
    </location>
</feature>
<feature type="region of interest" description="Regulatory domain" evidence="1">
    <location>
        <begin position="392"/>
        <end position="523"/>
    </location>
</feature>
<feature type="binding site" evidence="1">
    <location>
        <position position="14"/>
    </location>
    <ligand>
        <name>Mn(2+)</name>
        <dbReference type="ChEBI" id="CHEBI:29035"/>
    </ligand>
</feature>
<feature type="binding site" evidence="1">
    <location>
        <position position="202"/>
    </location>
    <ligand>
        <name>Mn(2+)</name>
        <dbReference type="ChEBI" id="CHEBI:29035"/>
    </ligand>
</feature>
<feature type="binding site" evidence="1">
    <location>
        <position position="204"/>
    </location>
    <ligand>
        <name>Mn(2+)</name>
        <dbReference type="ChEBI" id="CHEBI:29035"/>
    </ligand>
</feature>
<feature type="binding site" evidence="1">
    <location>
        <position position="238"/>
    </location>
    <ligand>
        <name>Mn(2+)</name>
        <dbReference type="ChEBI" id="CHEBI:29035"/>
    </ligand>
</feature>
<feature type="sequence conflict" description="In Ref. 1; CAA35931." evidence="7" ref="1">
    <original>S</original>
    <variation>R</variation>
    <location>
        <position position="113"/>
    </location>
</feature>
<evidence type="ECO:0000255" key="1">
    <source>
        <dbReference type="HAMAP-Rule" id="MF_01025"/>
    </source>
</evidence>
<evidence type="ECO:0000269" key="2">
    <source>
    </source>
</evidence>
<evidence type="ECO:0000269" key="3">
    <source>
    </source>
</evidence>
<evidence type="ECO:0000269" key="4">
    <source>
    </source>
</evidence>
<evidence type="ECO:0000303" key="5">
    <source>
    </source>
</evidence>
<evidence type="ECO:0000303" key="6">
    <source>
    </source>
</evidence>
<evidence type="ECO:0000305" key="7"/>
<protein>
    <recommendedName>
        <fullName evidence="1 7">2-isopropylmalate synthase</fullName>
        <ecNumber evidence="1 3 4">2.3.3.13</ecNumber>
    </recommendedName>
    <alternativeName>
        <fullName evidence="1 6">Alpha-IPM synthase</fullName>
    </alternativeName>
    <alternativeName>
        <fullName evidence="1 5">Alpha-isopropylmalate synthase</fullName>
    </alternativeName>
</protein>
<organism>
    <name type="scientific">Salmonella typhimurium (strain LT2 / SGSC1412 / ATCC 700720)</name>
    <dbReference type="NCBI Taxonomy" id="99287"/>
    <lineage>
        <taxon>Bacteria</taxon>
        <taxon>Pseudomonadati</taxon>
        <taxon>Pseudomonadota</taxon>
        <taxon>Gammaproteobacteria</taxon>
        <taxon>Enterobacterales</taxon>
        <taxon>Enterobacteriaceae</taxon>
        <taxon>Salmonella</taxon>
    </lineage>
</organism>
<accession>P15875</accession>
<accession>P74845</accession>
<dbReference type="EC" id="2.3.3.13" evidence="1 3 4"/>
<dbReference type="EMBL" id="X51583">
    <property type="protein sequence ID" value="CAA35931.1"/>
    <property type="status" value="ALT_FRAME"/>
    <property type="molecule type" value="Genomic_DNA"/>
</dbReference>
<dbReference type="EMBL" id="AE006468">
    <property type="protein sequence ID" value="AAL19077.1"/>
    <property type="molecule type" value="Genomic_DNA"/>
</dbReference>
<dbReference type="EMBL" id="X00059">
    <property type="protein sequence ID" value="CAA24935.1"/>
    <property type="molecule type" value="Genomic_DNA"/>
</dbReference>
<dbReference type="RefSeq" id="NP_459118.1">
    <property type="nucleotide sequence ID" value="NC_003197.2"/>
</dbReference>
<dbReference type="RefSeq" id="WP_000082819.1">
    <property type="nucleotide sequence ID" value="NC_003197.2"/>
</dbReference>
<dbReference type="SMR" id="P15875"/>
<dbReference type="STRING" id="99287.STM0113"/>
<dbReference type="PaxDb" id="99287-STM0113"/>
<dbReference type="GeneID" id="1251631"/>
<dbReference type="KEGG" id="stm:STM0113"/>
<dbReference type="PATRIC" id="fig|99287.12.peg.119"/>
<dbReference type="HOGENOM" id="CLU_022158_0_1_6"/>
<dbReference type="OMA" id="NTMRMLV"/>
<dbReference type="PhylomeDB" id="P15875"/>
<dbReference type="BioCyc" id="SENT99287:STM0113-MONOMER"/>
<dbReference type="UniPathway" id="UPA00048">
    <property type="reaction ID" value="UER00070"/>
</dbReference>
<dbReference type="Proteomes" id="UP000001014">
    <property type="component" value="Chromosome"/>
</dbReference>
<dbReference type="GO" id="GO:0005829">
    <property type="term" value="C:cytosol"/>
    <property type="evidence" value="ECO:0000318"/>
    <property type="project" value="GO_Central"/>
</dbReference>
<dbReference type="GO" id="GO:0003852">
    <property type="term" value="F:2-isopropylmalate synthase activity"/>
    <property type="evidence" value="ECO:0000318"/>
    <property type="project" value="GO_Central"/>
</dbReference>
<dbReference type="GO" id="GO:0003985">
    <property type="term" value="F:acetyl-CoA C-acetyltransferase activity"/>
    <property type="evidence" value="ECO:0007669"/>
    <property type="project" value="UniProtKB-UniRule"/>
</dbReference>
<dbReference type="GO" id="GO:0030145">
    <property type="term" value="F:manganese ion binding"/>
    <property type="evidence" value="ECO:0007669"/>
    <property type="project" value="UniProtKB-UniRule"/>
</dbReference>
<dbReference type="GO" id="GO:0009098">
    <property type="term" value="P:L-leucine biosynthetic process"/>
    <property type="evidence" value="ECO:0000318"/>
    <property type="project" value="GO_Central"/>
</dbReference>
<dbReference type="CDD" id="cd07940">
    <property type="entry name" value="DRE_TIM_IPMS"/>
    <property type="match status" value="1"/>
</dbReference>
<dbReference type="FunFam" id="1.10.238.260:FF:000001">
    <property type="entry name" value="2-isopropylmalate synthase"/>
    <property type="match status" value="1"/>
</dbReference>
<dbReference type="FunFam" id="3.20.20.70:FF:000010">
    <property type="entry name" value="2-isopropylmalate synthase"/>
    <property type="match status" value="1"/>
</dbReference>
<dbReference type="FunFam" id="3.30.160.270:FF:000001">
    <property type="entry name" value="2-isopropylmalate synthase"/>
    <property type="match status" value="1"/>
</dbReference>
<dbReference type="Gene3D" id="1.10.238.260">
    <property type="match status" value="1"/>
</dbReference>
<dbReference type="Gene3D" id="3.30.160.270">
    <property type="match status" value="1"/>
</dbReference>
<dbReference type="Gene3D" id="3.20.20.70">
    <property type="entry name" value="Aldolase class I"/>
    <property type="match status" value="1"/>
</dbReference>
<dbReference type="HAMAP" id="MF_01025">
    <property type="entry name" value="LeuA_type1"/>
    <property type="match status" value="1"/>
</dbReference>
<dbReference type="InterPro" id="IPR050073">
    <property type="entry name" value="2-IPM_HCS-like"/>
</dbReference>
<dbReference type="InterPro" id="IPR013709">
    <property type="entry name" value="2-isopropylmalate_synth_dimer"/>
</dbReference>
<dbReference type="InterPro" id="IPR002034">
    <property type="entry name" value="AIPM/Hcit_synth_CS"/>
</dbReference>
<dbReference type="InterPro" id="IPR013785">
    <property type="entry name" value="Aldolase_TIM"/>
</dbReference>
<dbReference type="InterPro" id="IPR054691">
    <property type="entry name" value="LeuA/HCS_post-cat"/>
</dbReference>
<dbReference type="InterPro" id="IPR036230">
    <property type="entry name" value="LeuA_allosteric_dom_sf"/>
</dbReference>
<dbReference type="InterPro" id="IPR005671">
    <property type="entry name" value="LeuA_bact_synth"/>
</dbReference>
<dbReference type="InterPro" id="IPR000891">
    <property type="entry name" value="PYR_CT"/>
</dbReference>
<dbReference type="NCBIfam" id="TIGR00973">
    <property type="entry name" value="leuA_bact"/>
    <property type="match status" value="1"/>
</dbReference>
<dbReference type="NCBIfam" id="NF002084">
    <property type="entry name" value="PRK00915.1-1"/>
    <property type="match status" value="1"/>
</dbReference>
<dbReference type="NCBIfam" id="NF002086">
    <property type="entry name" value="PRK00915.1-3"/>
    <property type="match status" value="1"/>
</dbReference>
<dbReference type="PANTHER" id="PTHR10277:SF9">
    <property type="entry name" value="2-ISOPROPYLMALATE SYNTHASE 1, CHLOROPLASTIC-RELATED"/>
    <property type="match status" value="1"/>
</dbReference>
<dbReference type="PANTHER" id="PTHR10277">
    <property type="entry name" value="HOMOCITRATE SYNTHASE-RELATED"/>
    <property type="match status" value="1"/>
</dbReference>
<dbReference type="Pfam" id="PF22617">
    <property type="entry name" value="HCS_D2"/>
    <property type="match status" value="1"/>
</dbReference>
<dbReference type="Pfam" id="PF00682">
    <property type="entry name" value="HMGL-like"/>
    <property type="match status" value="1"/>
</dbReference>
<dbReference type="Pfam" id="PF08502">
    <property type="entry name" value="LeuA_dimer"/>
    <property type="match status" value="1"/>
</dbReference>
<dbReference type="SMART" id="SM00917">
    <property type="entry name" value="LeuA_dimer"/>
    <property type="match status" value="1"/>
</dbReference>
<dbReference type="SUPFAM" id="SSF110921">
    <property type="entry name" value="2-isopropylmalate synthase LeuA, allosteric (dimerisation) domain"/>
    <property type="match status" value="1"/>
</dbReference>
<dbReference type="SUPFAM" id="SSF51569">
    <property type="entry name" value="Aldolase"/>
    <property type="match status" value="1"/>
</dbReference>
<dbReference type="PROSITE" id="PS00815">
    <property type="entry name" value="AIPM_HOMOCIT_SYNTH_1"/>
    <property type="match status" value="1"/>
</dbReference>
<dbReference type="PROSITE" id="PS00816">
    <property type="entry name" value="AIPM_HOMOCIT_SYNTH_2"/>
    <property type="match status" value="1"/>
</dbReference>
<dbReference type="PROSITE" id="PS50991">
    <property type="entry name" value="PYR_CT"/>
    <property type="match status" value="1"/>
</dbReference>
<comment type="function">
    <text evidence="1 3 4">Catalyzes the condensation of the acetyl group of acetyl-CoA with 3-methyl-2-oxobutanoate (2-ketoisovalerate) to form 3-carboxy-3-hydroxy-4-methylpentanoate (2-isopropylmalate).</text>
</comment>
<comment type="catalytic activity">
    <reaction evidence="1 3 4">
        <text>3-methyl-2-oxobutanoate + acetyl-CoA + H2O = (2S)-2-isopropylmalate + CoA + H(+)</text>
        <dbReference type="Rhea" id="RHEA:21524"/>
        <dbReference type="ChEBI" id="CHEBI:1178"/>
        <dbReference type="ChEBI" id="CHEBI:11851"/>
        <dbReference type="ChEBI" id="CHEBI:15377"/>
        <dbReference type="ChEBI" id="CHEBI:15378"/>
        <dbReference type="ChEBI" id="CHEBI:57287"/>
        <dbReference type="ChEBI" id="CHEBI:57288"/>
        <dbReference type="EC" id="2.3.3.13"/>
    </reaction>
</comment>
<comment type="cofactor">
    <cofactor evidence="1">
        <name>Mn(2+)</name>
        <dbReference type="ChEBI" id="CHEBI:29035"/>
    </cofactor>
</comment>
<comment type="activity regulation">
    <text evidence="3">Inhibited by EDTA, mercuric salts and by leucine. Inhibition by leucine is non-competitive with respect to 3-methyl-2-oxobutanoate and competitive with respect to acetyl-CoA, and is more sensitive at pH 6.5 than pH 8.5.</text>
</comment>
<comment type="biophysicochemical properties">
    <kinetics>
        <KM evidence="3">0.06 mM for 3-methyl-2-oxobutanoate</KM>
        <KM evidence="3">1.1 mM for 2-oxobutanoate</KM>
        <KM evidence="3">10 mM for pyruvate</KM>
        <KM evidence="3">0.2 mM for acetyl-CoA</KM>
    </kinetics>
    <phDependence>
        <text evidence="3">Optimum pH is 8.5.</text>
    </phDependence>
</comment>
<comment type="pathway">
    <text evidence="1">Amino-acid biosynthesis; L-leucine biosynthesis; L-leucine from 3-methyl-2-oxobutanoate: step 1/4.</text>
</comment>
<comment type="subunit">
    <text evidence="2">Present in a monomer-homotetramer equilibrium.</text>
</comment>
<comment type="subcellular location">
    <subcellularLocation>
        <location evidence="1">Cytoplasm</location>
    </subcellularLocation>
</comment>
<comment type="similarity">
    <text evidence="1 7">Belongs to the alpha-IPM synthase/homocitrate synthase family. LeuA type 1 subfamily.</text>
</comment>
<comment type="sequence caution" evidence="7">
    <conflict type="frameshift">
        <sequence resource="EMBL-CDS" id="CAA35931"/>
    </conflict>
</comment>
<keyword id="KW-0028">Amino-acid biosynthesis</keyword>
<keyword id="KW-0100">Branched-chain amino acid biosynthesis</keyword>
<keyword id="KW-0963">Cytoplasm</keyword>
<keyword id="KW-0903">Direct protein sequencing</keyword>
<keyword id="KW-0432">Leucine biosynthesis</keyword>
<keyword id="KW-0464">Manganese</keyword>
<keyword id="KW-0479">Metal-binding</keyword>
<keyword id="KW-1185">Reference proteome</keyword>
<keyword id="KW-0808">Transferase</keyword>